<proteinExistence type="inferred from homology"/>
<comment type="function">
    <text evidence="1">Core subunit of the mitochondrial membrane respiratory chain NADH dehydrogenase (Complex I) that is believed to belong to the minimal assembly required for catalysis. Complex I functions in the transfer of electrons from NADH to the respiratory chain. The immediate electron acceptor for the enzyme is believed to be ubiquinone (By similarity).</text>
</comment>
<comment type="catalytic activity">
    <reaction>
        <text>a ubiquinone + NADH + 5 H(+)(in) = a ubiquinol + NAD(+) + 4 H(+)(out)</text>
        <dbReference type="Rhea" id="RHEA:29091"/>
        <dbReference type="Rhea" id="RHEA-COMP:9565"/>
        <dbReference type="Rhea" id="RHEA-COMP:9566"/>
        <dbReference type="ChEBI" id="CHEBI:15378"/>
        <dbReference type="ChEBI" id="CHEBI:16389"/>
        <dbReference type="ChEBI" id="CHEBI:17976"/>
        <dbReference type="ChEBI" id="CHEBI:57540"/>
        <dbReference type="ChEBI" id="CHEBI:57945"/>
        <dbReference type="EC" id="7.1.1.2"/>
    </reaction>
</comment>
<comment type="subcellular location">
    <subcellularLocation>
        <location>Mitochondrion inner membrane</location>
        <topology>Multi-pass membrane protein</topology>
    </subcellularLocation>
</comment>
<comment type="similarity">
    <text evidence="3">Belongs to the complex I subunit 2 family.</text>
</comment>
<keyword id="KW-0249">Electron transport</keyword>
<keyword id="KW-0472">Membrane</keyword>
<keyword id="KW-0496">Mitochondrion</keyword>
<keyword id="KW-0999">Mitochondrion inner membrane</keyword>
<keyword id="KW-0520">NAD</keyword>
<keyword id="KW-0679">Respiratory chain</keyword>
<keyword id="KW-1278">Translocase</keyword>
<keyword id="KW-0812">Transmembrane</keyword>
<keyword id="KW-1133">Transmembrane helix</keyword>
<keyword id="KW-0813">Transport</keyword>
<keyword id="KW-0830">Ubiquinone</keyword>
<dbReference type="EC" id="7.1.1.2"/>
<dbReference type="EMBL" id="X05915">
    <property type="protein sequence ID" value="CAA29342.1"/>
    <property type="molecule type" value="Genomic_DNA"/>
</dbReference>
<dbReference type="EMBL" id="X03240">
    <property type="protein sequence ID" value="CAA26985.1"/>
    <property type="molecule type" value="Genomic_DNA"/>
</dbReference>
<dbReference type="PIR" id="B93488">
    <property type="entry name" value="QXFF2Y"/>
</dbReference>
<dbReference type="RefSeq" id="NP_006902.1">
    <property type="nucleotide sequence ID" value="NC_001322.1"/>
</dbReference>
<dbReference type="SMR" id="P03895"/>
<dbReference type="EnsemblMetazoa" id="GeneID_807621_df_mr">
    <property type="protein sequence ID" value="NP_006902.1"/>
    <property type="gene ID" value="GeneID_807621"/>
</dbReference>
<dbReference type="GeneID" id="807621"/>
<dbReference type="KEGG" id="dya:ND2"/>
<dbReference type="CTD" id="4536"/>
<dbReference type="OrthoDB" id="4092844at2759"/>
<dbReference type="Proteomes" id="UP000002282">
    <property type="component" value="Mitochondrion"/>
</dbReference>
<dbReference type="GO" id="GO:0005743">
    <property type="term" value="C:mitochondrial inner membrane"/>
    <property type="evidence" value="ECO:0007669"/>
    <property type="project" value="UniProtKB-SubCell"/>
</dbReference>
<dbReference type="GO" id="GO:0045271">
    <property type="term" value="C:respiratory chain complex I"/>
    <property type="evidence" value="ECO:0007669"/>
    <property type="project" value="EnsemblMetazoa"/>
</dbReference>
<dbReference type="GO" id="GO:0008137">
    <property type="term" value="F:NADH dehydrogenase (ubiquinone) activity"/>
    <property type="evidence" value="ECO:0007669"/>
    <property type="project" value="UniProtKB-EC"/>
</dbReference>
<dbReference type="GO" id="GO:0006120">
    <property type="term" value="P:mitochondrial electron transport, NADH to ubiquinone"/>
    <property type="evidence" value="ECO:0007669"/>
    <property type="project" value="InterPro"/>
</dbReference>
<dbReference type="InterPro" id="IPR050175">
    <property type="entry name" value="Complex_I_Subunit_2"/>
</dbReference>
<dbReference type="InterPro" id="IPR010933">
    <property type="entry name" value="NADH_DH_su2_C"/>
</dbReference>
<dbReference type="InterPro" id="IPR003917">
    <property type="entry name" value="NADH_UbQ_OxRdtase_chain2"/>
</dbReference>
<dbReference type="InterPro" id="IPR001750">
    <property type="entry name" value="ND/Mrp_TM"/>
</dbReference>
<dbReference type="PANTHER" id="PTHR46552">
    <property type="entry name" value="NADH-UBIQUINONE OXIDOREDUCTASE CHAIN 2"/>
    <property type="match status" value="1"/>
</dbReference>
<dbReference type="PANTHER" id="PTHR46552:SF1">
    <property type="entry name" value="NADH-UBIQUINONE OXIDOREDUCTASE CHAIN 2"/>
    <property type="match status" value="1"/>
</dbReference>
<dbReference type="Pfam" id="PF06444">
    <property type="entry name" value="NADH_dehy_S2_C"/>
    <property type="match status" value="1"/>
</dbReference>
<dbReference type="Pfam" id="PF00361">
    <property type="entry name" value="Proton_antipo_M"/>
    <property type="match status" value="1"/>
</dbReference>
<dbReference type="PRINTS" id="PR01436">
    <property type="entry name" value="NADHDHGNASE2"/>
</dbReference>
<gene>
    <name type="primary">mt:ND2</name>
    <name type="synonym">ND2</name>
</gene>
<accession>P03895</accession>
<reference key="1">
    <citation type="journal article" date="1983" name="Nucleic Acids Res.">
        <title>Genes for cytochrome c oxidase subunit I, URF2, and three tRNAs in Drosophila mitochondrial DNA.</title>
        <authorList>
            <person name="Clary D.O."/>
            <person name="Wolstenholme D.R."/>
        </authorList>
    </citation>
    <scope>NUCLEOTIDE SEQUENCE [GENOMIC DNA]</scope>
</reference>
<reference key="2">
    <citation type="journal article" date="1985" name="J. Mol. Evol.">
        <title>The mitochondrial DNA molecular of Drosophila yakuba: nucleotide sequence, gene organization, and genetic code.</title>
        <authorList>
            <person name="Clary D.O."/>
            <person name="Wolstenholme D.R."/>
        </authorList>
    </citation>
    <scope>NUCLEOTIDE SEQUENCE [LARGE SCALE GENOMIC DNA]</scope>
    <source>
        <strain>2317.6 Ivory Coast</strain>
    </source>
</reference>
<reference key="3">
    <citation type="journal article" date="1982" name="Nucleic Acids Res.">
        <title>Drosophila mitochondrial DNA: a novel gene order.</title>
        <authorList>
            <person name="Clary D.O."/>
            <person name="Goddard J.M."/>
            <person name="Martin S.C."/>
            <person name="Fauron C.M.-R."/>
            <person name="Wolstenholme D.R."/>
        </authorList>
    </citation>
    <scope>NUCLEOTIDE SEQUENCE [GENOMIC DNA] OF 1-56</scope>
</reference>
<reference key="4">
    <citation type="journal article" date="1987" name="J. Mol. Evol.">
        <title>Drosophila mitochondrial DNA: conserved sequences in the A + T-rich region and supporting evidence for a secondary structure model of the small ribosomal RNA.</title>
        <authorList>
            <person name="Clary D.O."/>
            <person name="Wolstenholme D.R."/>
        </authorList>
    </citation>
    <scope>NUCLEOTIDE SEQUENCE [GENOMIC DNA] OF 1-56</scope>
</reference>
<feature type="chain" id="PRO_0000117584" description="NADH-ubiquinone oxidoreductase chain 2">
    <location>
        <begin position="1"/>
        <end position="341"/>
    </location>
</feature>
<feature type="transmembrane region" description="Helical" evidence="2">
    <location>
        <begin position="8"/>
        <end position="28"/>
    </location>
</feature>
<feature type="transmembrane region" description="Helical" evidence="2">
    <location>
        <begin position="61"/>
        <end position="81"/>
    </location>
</feature>
<feature type="transmembrane region" description="Helical" evidence="2">
    <location>
        <begin position="95"/>
        <end position="115"/>
    </location>
</feature>
<feature type="transmembrane region" description="Helical" evidence="2">
    <location>
        <begin position="121"/>
        <end position="141"/>
    </location>
</feature>
<feature type="transmembrane region" description="Helical" evidence="2">
    <location>
        <begin position="146"/>
        <end position="166"/>
    </location>
</feature>
<feature type="transmembrane region" description="Helical" evidence="2">
    <location>
        <begin position="174"/>
        <end position="194"/>
    </location>
</feature>
<feature type="transmembrane region" description="Helical" evidence="2">
    <location>
        <begin position="195"/>
        <end position="215"/>
    </location>
</feature>
<feature type="transmembrane region" description="Helical" evidence="2">
    <location>
        <begin position="238"/>
        <end position="258"/>
    </location>
</feature>
<feature type="transmembrane region" description="Helical" evidence="2">
    <location>
        <begin position="273"/>
        <end position="293"/>
    </location>
</feature>
<feature type="transmembrane region" description="Helical" evidence="2">
    <location>
        <begin position="321"/>
        <end position="341"/>
    </location>
</feature>
<evidence type="ECO:0000250" key="1"/>
<evidence type="ECO:0000255" key="2"/>
<evidence type="ECO:0000305" key="3"/>
<sequence length="341" mass="39496">MFYNSSKILFTTIMIIGTLITVTSNSWLGAWMGLEINLLSFIPLLSDNNNLMSTEASLKYFLTQALASTVLLFSSILLMLANNLNNEINESFTSMIIMSALLLKSGAAPFHFWFPNMMEGLTWMNALMLMTWQKIAPLMLISYLNIKNLLLISVILSVIIGAIGGLNQTSLRKLMAFSSINHLGWMLSSLMISESIWLIYFIFYSFLSFVLTFMFNIFKLFHLNQLFSWFVNSKILKFSLFMNFLSLGGLPPFLGFLPKWLVIQQLTMCNQYFLLTLMMMSTLITLFFYLRICYSAFMLNYFENNWIMEMNMNSNNTNLYLIMTFFSIFGLFLISLFFFML</sequence>
<geneLocation type="mitochondrion"/>
<organism>
    <name type="scientific">Drosophila yakuba</name>
    <name type="common">Fruit fly</name>
    <dbReference type="NCBI Taxonomy" id="7245"/>
    <lineage>
        <taxon>Eukaryota</taxon>
        <taxon>Metazoa</taxon>
        <taxon>Ecdysozoa</taxon>
        <taxon>Arthropoda</taxon>
        <taxon>Hexapoda</taxon>
        <taxon>Insecta</taxon>
        <taxon>Pterygota</taxon>
        <taxon>Neoptera</taxon>
        <taxon>Endopterygota</taxon>
        <taxon>Diptera</taxon>
        <taxon>Brachycera</taxon>
        <taxon>Muscomorpha</taxon>
        <taxon>Ephydroidea</taxon>
        <taxon>Drosophilidae</taxon>
        <taxon>Drosophila</taxon>
        <taxon>Sophophora</taxon>
    </lineage>
</organism>
<name>NU2M_DROYA</name>
<protein>
    <recommendedName>
        <fullName>NADH-ubiquinone oxidoreductase chain 2</fullName>
        <ecNumber>7.1.1.2</ecNumber>
    </recommendedName>
    <alternativeName>
        <fullName>NADH dehydrogenase subunit 2</fullName>
    </alternativeName>
</protein>